<comment type="function">
    <text evidence="3">Actin is a highly conserved protein that polymerizes to produce filaments that form cross-linked networks in the cytoplasm of cells. Actin exists in both monomeric (G-actin) and polymeric (F-actin) forms, both forms playing key functions, such as cell motility and contraction. In addition to their role in the cytoplasmic cytoskeleton, G- and F-actin also localize in the nucleus, and regulate gene transcription and motility and repair of damaged DNA.</text>
</comment>
<comment type="catalytic activity">
    <reaction evidence="5">
        <text>ATP + H2O = ADP + phosphate + H(+)</text>
        <dbReference type="Rhea" id="RHEA:13065"/>
        <dbReference type="ChEBI" id="CHEBI:15377"/>
        <dbReference type="ChEBI" id="CHEBI:15378"/>
        <dbReference type="ChEBI" id="CHEBI:30616"/>
        <dbReference type="ChEBI" id="CHEBI:43474"/>
        <dbReference type="ChEBI" id="CHEBI:456216"/>
    </reaction>
</comment>
<comment type="subunit">
    <text evidence="3 4">Polymerization of globular actin (G-actin) leads to a structural filament (F-actin) in the form of a two-stranded helix (By similarity). Each actin can bind to 4 others (By similarity).</text>
</comment>
<comment type="subcellular location">
    <subcellularLocation>
        <location evidence="4">Cytoplasm</location>
        <location evidence="4">Cytoskeleton</location>
    </subcellularLocation>
    <subcellularLocation>
        <location evidence="1">Nucleus</location>
    </subcellularLocation>
</comment>
<comment type="PTM">
    <molecule>Actin, cytoplasmic 1</molecule>
    <text evidence="3">N-terminal cleavage of acetylated methionine of immature cytoplasmic actin by ACTMAP.</text>
</comment>
<comment type="PTM">
    <text evidence="4">Oxidation of Met-44 and Met-47 by MICALs (mical1, mical2 or mical3) to form methionine sulfoxide promotes actin filament depolymerization. Mical1 and mical2 produce the (R)-S-oxide form. The (R)-S-oxide form is reverted by msrb1 and msrb2, which promote actin repolymerization.</text>
</comment>
<comment type="PTM">
    <text evidence="2">Methylation at His-73 by SETD3. Methylation stabilizes actin filaments.</text>
</comment>
<comment type="miscellaneous">
    <text evidence="1">In vertebrates 3 main groups of actin isoforms, alpha, beta and gamma have been identified. The alpha actins are found in muscle tissues and are a major constituent of the contractile apparatus. The beta and gamma actins coexist in most cell types as components of the cytoskeleton and as mediators of internal cell motility.</text>
</comment>
<comment type="similarity">
    <text evidence="6">Belongs to the actin family.</text>
</comment>
<keyword id="KW-0007">Acetylation</keyword>
<keyword id="KW-0067">ATP-binding</keyword>
<keyword id="KW-0963">Cytoplasm</keyword>
<keyword id="KW-0206">Cytoskeleton</keyword>
<keyword id="KW-0378">Hydrolase</keyword>
<keyword id="KW-0488">Methylation</keyword>
<keyword id="KW-0547">Nucleotide-binding</keyword>
<keyword id="KW-0539">Nucleus</keyword>
<keyword id="KW-0558">Oxidation</keyword>
<keyword id="KW-1185">Reference proteome</keyword>
<dbReference type="EC" id="3.6.4.-" evidence="5"/>
<dbReference type="EMBL" id="D89627">
    <property type="protein sequence ID" value="BAA31750.1"/>
    <property type="molecule type" value="mRNA"/>
</dbReference>
<dbReference type="EMBL" id="S74868">
    <property type="protein sequence ID" value="AAD14159.2"/>
    <property type="molecule type" value="Genomic_DNA"/>
</dbReference>
<dbReference type="RefSeq" id="NP_001098278.1">
    <property type="nucleotide sequence ID" value="NM_001104808.1"/>
</dbReference>
<dbReference type="SMR" id="P79818"/>
<dbReference type="FunCoup" id="P79818">
    <property type="interactions" value="1888"/>
</dbReference>
<dbReference type="STRING" id="8090.ENSORLP00000011676"/>
<dbReference type="Ensembl" id="ENSORLT00000045922.1">
    <property type="protein sequence ID" value="ENSORLP00000026479.1"/>
    <property type="gene ID" value="ENSORLG00000013676.2"/>
</dbReference>
<dbReference type="Ensembl" id="ENSORLT00015027359.1">
    <property type="protein sequence ID" value="ENSORLP00015033965.1"/>
    <property type="gene ID" value="ENSORLG00015019724.1"/>
</dbReference>
<dbReference type="Ensembl" id="ENSORLT00020002212.1">
    <property type="protein sequence ID" value="ENSORLP00020007838.1"/>
    <property type="gene ID" value="ENSORLG00020008755.1"/>
</dbReference>
<dbReference type="GeneID" id="100049433"/>
<dbReference type="KEGG" id="ola:100049433"/>
<dbReference type="CTD" id="57935"/>
<dbReference type="eggNOG" id="KOG0676">
    <property type="taxonomic scope" value="Eukaryota"/>
</dbReference>
<dbReference type="GeneTree" id="ENSGT00950000182960"/>
<dbReference type="HOGENOM" id="CLU_027965_0_2_1"/>
<dbReference type="InParanoid" id="P79818"/>
<dbReference type="OMA" id="FHTTAER"/>
<dbReference type="OrthoDB" id="6953074at2759"/>
<dbReference type="TreeFam" id="TF354237"/>
<dbReference type="Proteomes" id="UP000001038">
    <property type="component" value="Chromosome 8"/>
</dbReference>
<dbReference type="Proteomes" id="UP000265180">
    <property type="component" value="Chromosome 8"/>
</dbReference>
<dbReference type="Proteomes" id="UP000265200">
    <property type="component" value="Chromosome 8"/>
</dbReference>
<dbReference type="Bgee" id="ENSORLG00000013676">
    <property type="expression patterns" value="Expressed in intestine and 14 other cell types or tissues"/>
</dbReference>
<dbReference type="GO" id="GO:0015629">
    <property type="term" value="C:actin cytoskeleton"/>
    <property type="evidence" value="ECO:0000250"/>
    <property type="project" value="UniProtKB"/>
</dbReference>
<dbReference type="GO" id="GO:0005856">
    <property type="term" value="C:cytoskeleton"/>
    <property type="evidence" value="ECO:0000250"/>
    <property type="project" value="AgBase"/>
</dbReference>
<dbReference type="GO" id="GO:0097433">
    <property type="term" value="C:dense body"/>
    <property type="evidence" value="ECO:0000250"/>
    <property type="project" value="AgBase"/>
</dbReference>
<dbReference type="GO" id="GO:0005925">
    <property type="term" value="C:focal adhesion"/>
    <property type="evidence" value="ECO:0000250"/>
    <property type="project" value="AgBase"/>
</dbReference>
<dbReference type="GO" id="GO:0005634">
    <property type="term" value="C:nucleus"/>
    <property type="evidence" value="ECO:0000250"/>
    <property type="project" value="UniProtKB"/>
</dbReference>
<dbReference type="GO" id="GO:0005886">
    <property type="term" value="C:plasma membrane"/>
    <property type="evidence" value="ECO:0000250"/>
    <property type="project" value="AgBase"/>
</dbReference>
<dbReference type="GO" id="GO:0005524">
    <property type="term" value="F:ATP binding"/>
    <property type="evidence" value="ECO:0007669"/>
    <property type="project" value="UniProtKB-KW"/>
</dbReference>
<dbReference type="GO" id="GO:0016787">
    <property type="term" value="F:hydrolase activity"/>
    <property type="evidence" value="ECO:0007669"/>
    <property type="project" value="UniProtKB-KW"/>
</dbReference>
<dbReference type="CDD" id="cd10224">
    <property type="entry name" value="ASKHA_NBD_actin"/>
    <property type="match status" value="1"/>
</dbReference>
<dbReference type="FunFam" id="2.30.36.70:FF:000001">
    <property type="entry name" value="Actin, alpha skeletal muscle"/>
    <property type="match status" value="1"/>
</dbReference>
<dbReference type="FunFam" id="3.30.420.40:FF:000131">
    <property type="entry name" value="Actin, alpha skeletal muscle"/>
    <property type="match status" value="1"/>
</dbReference>
<dbReference type="FunFam" id="3.30.420.40:FF:000291">
    <property type="entry name" value="Actin, alpha skeletal muscle"/>
    <property type="match status" value="1"/>
</dbReference>
<dbReference type="FunFam" id="3.90.640.10:FF:000047">
    <property type="entry name" value="Actin, alpha skeletal muscle"/>
    <property type="match status" value="1"/>
</dbReference>
<dbReference type="FunFam" id="3.30.420.40:FF:000058">
    <property type="entry name" value="Putative actin-related protein 5"/>
    <property type="match status" value="1"/>
</dbReference>
<dbReference type="Gene3D" id="3.30.420.40">
    <property type="match status" value="2"/>
</dbReference>
<dbReference type="Gene3D" id="3.90.640.10">
    <property type="entry name" value="Actin, Chain A, domain 4"/>
    <property type="match status" value="1"/>
</dbReference>
<dbReference type="InterPro" id="IPR004000">
    <property type="entry name" value="Actin"/>
</dbReference>
<dbReference type="InterPro" id="IPR020902">
    <property type="entry name" value="Actin/actin-like_CS"/>
</dbReference>
<dbReference type="InterPro" id="IPR004001">
    <property type="entry name" value="Actin_CS"/>
</dbReference>
<dbReference type="InterPro" id="IPR043129">
    <property type="entry name" value="ATPase_NBD"/>
</dbReference>
<dbReference type="PANTHER" id="PTHR11937">
    <property type="entry name" value="ACTIN"/>
    <property type="match status" value="1"/>
</dbReference>
<dbReference type="Pfam" id="PF00022">
    <property type="entry name" value="Actin"/>
    <property type="match status" value="1"/>
</dbReference>
<dbReference type="PRINTS" id="PR00190">
    <property type="entry name" value="ACTIN"/>
</dbReference>
<dbReference type="SMART" id="SM00268">
    <property type="entry name" value="ACTIN"/>
    <property type="match status" value="1"/>
</dbReference>
<dbReference type="SUPFAM" id="SSF53067">
    <property type="entry name" value="Actin-like ATPase domain"/>
    <property type="match status" value="2"/>
</dbReference>
<dbReference type="PROSITE" id="PS00406">
    <property type="entry name" value="ACTINS_1"/>
    <property type="match status" value="1"/>
</dbReference>
<dbReference type="PROSITE" id="PS00432">
    <property type="entry name" value="ACTINS_2"/>
    <property type="match status" value="1"/>
</dbReference>
<dbReference type="PROSITE" id="PS01132">
    <property type="entry name" value="ACTINS_ACT_LIKE"/>
    <property type="match status" value="1"/>
</dbReference>
<name>ACTB_ORYLA</name>
<proteinExistence type="evidence at transcript level"/>
<evidence type="ECO:0000250" key="1">
    <source>
        <dbReference type="UniProtKB" id="O93400"/>
    </source>
</evidence>
<evidence type="ECO:0000250" key="2">
    <source>
        <dbReference type="UniProtKB" id="P60706"/>
    </source>
</evidence>
<evidence type="ECO:0000250" key="3">
    <source>
        <dbReference type="UniProtKB" id="P60709"/>
    </source>
</evidence>
<evidence type="ECO:0000250" key="4">
    <source>
        <dbReference type="UniProtKB" id="P60710"/>
    </source>
</evidence>
<evidence type="ECO:0000250" key="5">
    <source>
        <dbReference type="UniProtKB" id="P68137"/>
    </source>
</evidence>
<evidence type="ECO:0000305" key="6"/>
<gene>
    <name type="primary">actb</name>
</gene>
<feature type="chain" id="PRO_0000367092" description="Actin, cytoplasmic 1">
    <location>
        <begin position="1"/>
        <end position="375"/>
    </location>
</feature>
<feature type="initiator methionine" description="Removed; alternate" evidence="2">
    <location>
        <position position="1"/>
    </location>
</feature>
<feature type="chain" id="PRO_0000000805" description="Actin, cytoplasmic 1, N-terminally processed">
    <location>
        <begin position="2"/>
        <end position="375"/>
    </location>
</feature>
<feature type="modified residue" description="N-acetylmethionine; in Actin, cytoplasmic 1; alternate" evidence="2">
    <location>
        <position position="1"/>
    </location>
</feature>
<feature type="modified residue" description="N-acetylaspartate; in Actin, cytoplasmic 1, N-terminally processed" evidence="2">
    <location>
        <position position="2"/>
    </location>
</feature>
<feature type="modified residue" description="Methionine (R)-sulfoxide" evidence="4">
    <location>
        <position position="44"/>
    </location>
</feature>
<feature type="modified residue" description="Methionine (R)-sulfoxide" evidence="4">
    <location>
        <position position="47"/>
    </location>
</feature>
<feature type="modified residue" description="Tele-methylhistidine" evidence="4">
    <location>
        <position position="73"/>
    </location>
</feature>
<protein>
    <recommendedName>
        <fullName>Actin, cytoplasmic 1</fullName>
        <ecNumber evidence="5">3.6.4.-</ecNumber>
    </recommendedName>
    <alternativeName>
        <fullName>Beta-actin</fullName>
    </alternativeName>
    <alternativeName>
        <fullName>OlCA1</fullName>
    </alternativeName>
    <component>
        <recommendedName>
            <fullName>Actin, cytoplasmic 1, N-terminally processed</fullName>
        </recommendedName>
    </component>
</protein>
<reference key="1">
    <citation type="submission" date="1996-11" db="EMBL/GenBank/DDBJ databases">
        <title>Medaka actin genes.</title>
        <authorList>
            <person name="Kusakabe R."/>
            <person name="Kusakabe T."/>
            <person name="Suzuki N."/>
        </authorList>
    </citation>
    <scope>NUCLEOTIDE SEQUENCE [MRNA]</scope>
</reference>
<reference key="2">
    <citation type="journal article" date="1994" name="Mol. Mar. Biol. Biotechnol.">
        <title>An efficient expression vector for transgenic medaka construction.</title>
        <authorList>
            <person name="Takagi S."/>
            <person name="Sasado T."/>
            <person name="Tamiya G."/>
            <person name="Ozato K."/>
            <person name="Wakamatsu Y."/>
            <person name="Takeshita A."/>
            <person name="Kimura M."/>
        </authorList>
    </citation>
    <scope>NUCLEOTIDE SEQUENCE [GENOMIC DNA]</scope>
</reference>
<sequence>MDDDIAALVVDNGSGMCKAGFAGDDAPRAVFPSIVGRPRHQGVMVGMGQKDSYVGDEAQSKRGILTLKYPIEHGIVTNWDDMEKIWHHTFYNELRIAPEEHPVLLTEAPLNPKANREKMTQIMFETFNSPAMYVAIQAVLSLYASGRTTGIVMDSGDGVTHTVPIYEGYALPHAILRLDLAGRDLTDYLMKILTERGYSFTTTAEREIVRDIKEKLCYVALDFEQEMGTAASSSSLEKSYELPDGQVITIGNERFRCPEALFQPSFLGMESCGIHETTYNSIMKCDVDIRKDLYANTVLSGGTTMYPGIADRMQKEITALAPSTMKIKIIAPPERKYSVWIGGSILASLSTFQQMWISKQEYDESGPSIVHRKCF</sequence>
<organism>
    <name type="scientific">Oryzias latipes</name>
    <name type="common">Japanese rice fish</name>
    <name type="synonym">Japanese killifish</name>
    <dbReference type="NCBI Taxonomy" id="8090"/>
    <lineage>
        <taxon>Eukaryota</taxon>
        <taxon>Metazoa</taxon>
        <taxon>Chordata</taxon>
        <taxon>Craniata</taxon>
        <taxon>Vertebrata</taxon>
        <taxon>Euteleostomi</taxon>
        <taxon>Actinopterygii</taxon>
        <taxon>Neopterygii</taxon>
        <taxon>Teleostei</taxon>
        <taxon>Neoteleostei</taxon>
        <taxon>Acanthomorphata</taxon>
        <taxon>Ovalentaria</taxon>
        <taxon>Atherinomorphae</taxon>
        <taxon>Beloniformes</taxon>
        <taxon>Adrianichthyidae</taxon>
        <taxon>Oryziinae</taxon>
        <taxon>Oryzias</taxon>
    </lineage>
</organism>
<accession>P79818</accession>
<accession>Q91393</accession>